<feature type="chain" id="PRO_0000095063" description="5'-deoxynucleotidase VV1_0013">
    <location>
        <begin position="1"/>
        <end position="179"/>
    </location>
</feature>
<feature type="binding site" evidence="1">
    <location>
        <position position="53"/>
    </location>
    <ligand>
        <name>a divalent metal cation</name>
        <dbReference type="ChEBI" id="CHEBI:60240"/>
    </ligand>
</feature>
<feature type="binding site" evidence="1">
    <location>
        <begin position="62"/>
        <end position="65"/>
    </location>
    <ligand>
        <name>substrate</name>
    </ligand>
</feature>
<feature type="binding site" evidence="1">
    <location>
        <position position="122"/>
    </location>
    <ligand>
        <name>a divalent metal cation</name>
        <dbReference type="ChEBI" id="CHEBI:60240"/>
    </ligand>
</feature>
<feature type="binding site" evidence="1">
    <location>
        <position position="122"/>
    </location>
    <ligand>
        <name>substrate</name>
    </ligand>
</feature>
<keyword id="KW-0963">Cytoplasm</keyword>
<keyword id="KW-0378">Hydrolase</keyword>
<keyword id="KW-0479">Metal-binding</keyword>
<keyword id="KW-0547">Nucleotide-binding</keyword>
<protein>
    <recommendedName>
        <fullName evidence="1">5'-deoxynucleotidase VV1_0013</fullName>
        <ecNumber evidence="1">3.1.3.89</ecNumber>
    </recommendedName>
    <alternativeName>
        <fullName evidence="1">5'-deoxyribonucleotidase</fullName>
    </alternativeName>
    <alternativeName>
        <fullName evidence="1">Nucleoside 5'-monophosphate phosphohydrolase</fullName>
    </alternativeName>
</protein>
<proteinExistence type="inferred from homology"/>
<reference key="1">
    <citation type="submission" date="2002-12" db="EMBL/GenBank/DDBJ databases">
        <title>Complete genome sequence of Vibrio vulnificus CMCP6.</title>
        <authorList>
            <person name="Rhee J.H."/>
            <person name="Kim S.Y."/>
            <person name="Chung S.S."/>
            <person name="Kim J.J."/>
            <person name="Moon Y.H."/>
            <person name="Jeong H."/>
            <person name="Choy H.E."/>
        </authorList>
    </citation>
    <scope>NUCLEOTIDE SEQUENCE [LARGE SCALE GENOMIC DNA]</scope>
    <source>
        <strain>CMCP6</strain>
    </source>
</reference>
<sequence length="179" mass="20714">MLQTTLKYRNRCNICVREYKCCIGSFMSRFGLSNMALTHYLTSIIHSFTSLAHQMLKRTNQDLPTPVKYYNPEIAKEYKKIEAAAEQKLLSMLPEEFQEDFRPFVISQQTSEEEAQIVKQADSICAYLKCLEELSAGNHEFALAKKRLDITLAERKTPEMDYFLNTFAPSFELSLDEIS</sequence>
<accession>Q8DG35</accession>
<dbReference type="EC" id="3.1.3.89" evidence="1"/>
<dbReference type="EMBL" id="AE016795">
    <property type="protein sequence ID" value="AAO08557.2"/>
    <property type="molecule type" value="Genomic_DNA"/>
</dbReference>
<dbReference type="SMR" id="Q8DG35"/>
<dbReference type="KEGG" id="vvu:VV1_0013"/>
<dbReference type="HOGENOM" id="CLU_1502898_0_0_6"/>
<dbReference type="Proteomes" id="UP000002275">
    <property type="component" value="Chromosome 1"/>
</dbReference>
<dbReference type="GO" id="GO:0005737">
    <property type="term" value="C:cytoplasm"/>
    <property type="evidence" value="ECO:0007669"/>
    <property type="project" value="UniProtKB-SubCell"/>
</dbReference>
<dbReference type="GO" id="GO:0002953">
    <property type="term" value="F:5'-deoxynucleotidase activity"/>
    <property type="evidence" value="ECO:0007669"/>
    <property type="project" value="UniProtKB-EC"/>
</dbReference>
<dbReference type="GO" id="GO:0046872">
    <property type="term" value="F:metal ion binding"/>
    <property type="evidence" value="ECO:0007669"/>
    <property type="project" value="UniProtKB-KW"/>
</dbReference>
<dbReference type="GO" id="GO:0000166">
    <property type="term" value="F:nucleotide binding"/>
    <property type="evidence" value="ECO:0007669"/>
    <property type="project" value="UniProtKB-KW"/>
</dbReference>
<dbReference type="Gene3D" id="1.10.3210.10">
    <property type="entry name" value="Hypothetical protein af1432"/>
    <property type="match status" value="1"/>
</dbReference>
<dbReference type="HAMAP" id="MF_01100">
    <property type="entry name" value="5DNU"/>
    <property type="match status" value="1"/>
</dbReference>
<dbReference type="InterPro" id="IPR022971">
    <property type="entry name" value="YfbR"/>
</dbReference>
<dbReference type="NCBIfam" id="NF003009">
    <property type="entry name" value="PRK03826.1"/>
    <property type="match status" value="1"/>
</dbReference>
<dbReference type="Pfam" id="PF12917">
    <property type="entry name" value="YfbR-like"/>
    <property type="match status" value="1"/>
</dbReference>
<dbReference type="SUPFAM" id="SSF109604">
    <property type="entry name" value="HD-domain/PDEase-like"/>
    <property type="match status" value="1"/>
</dbReference>
<name>5DNU_VIBVU</name>
<comment type="function">
    <text evidence="1">Catalyzes the strictly specific dephosphorylation of 2'-deoxyribonucleoside 5'-monophosphates.</text>
</comment>
<comment type="catalytic activity">
    <reaction evidence="1">
        <text>a 2'-deoxyribonucleoside 5'-phosphate + H2O = a 2'-deoxyribonucleoside + phosphate</text>
        <dbReference type="Rhea" id="RHEA:36167"/>
        <dbReference type="ChEBI" id="CHEBI:15377"/>
        <dbReference type="ChEBI" id="CHEBI:18274"/>
        <dbReference type="ChEBI" id="CHEBI:43474"/>
        <dbReference type="ChEBI" id="CHEBI:65317"/>
        <dbReference type="EC" id="3.1.3.89"/>
    </reaction>
</comment>
<comment type="cofactor">
    <cofactor evidence="1">
        <name>a divalent metal cation</name>
        <dbReference type="ChEBI" id="CHEBI:60240"/>
    </cofactor>
</comment>
<comment type="subunit">
    <text evidence="1">Homodimer.</text>
</comment>
<comment type="subcellular location">
    <subcellularLocation>
        <location evidence="1">Cytoplasm</location>
    </subcellularLocation>
</comment>
<comment type="similarity">
    <text evidence="1">Belongs to the 5DNU family.</text>
</comment>
<evidence type="ECO:0000255" key="1">
    <source>
        <dbReference type="HAMAP-Rule" id="MF_01100"/>
    </source>
</evidence>
<gene>
    <name type="ordered locus">VV1_0013</name>
</gene>
<organism>
    <name type="scientific">Vibrio vulnificus (strain CMCP6)</name>
    <dbReference type="NCBI Taxonomy" id="216895"/>
    <lineage>
        <taxon>Bacteria</taxon>
        <taxon>Pseudomonadati</taxon>
        <taxon>Pseudomonadota</taxon>
        <taxon>Gammaproteobacteria</taxon>
        <taxon>Vibrionales</taxon>
        <taxon>Vibrionaceae</taxon>
        <taxon>Vibrio</taxon>
    </lineage>
</organism>